<protein>
    <recommendedName>
        <fullName evidence="1">Ribonuclease P protein component 1</fullName>
        <shortName evidence="1">RNase P component 1</shortName>
        <ecNumber evidence="1">3.1.26.5</ecNumber>
    </recommendedName>
    <alternativeName>
        <fullName evidence="1">Rpp29</fullName>
    </alternativeName>
</protein>
<accession>O26119</accession>
<gene>
    <name evidence="1" type="primary">rnp1</name>
    <name type="ordered locus">MTH_11</name>
</gene>
<organism>
    <name type="scientific">Methanothermobacter thermautotrophicus (strain ATCC 29096 / DSM 1053 / JCM 10044 / NBRC 100330 / Delta H)</name>
    <name type="common">Methanobacterium thermoautotrophicum</name>
    <dbReference type="NCBI Taxonomy" id="187420"/>
    <lineage>
        <taxon>Archaea</taxon>
        <taxon>Methanobacteriati</taxon>
        <taxon>Methanobacteriota</taxon>
        <taxon>Methanomada group</taxon>
        <taxon>Methanobacteria</taxon>
        <taxon>Methanobacteriales</taxon>
        <taxon>Methanobacteriaceae</taxon>
        <taxon>Methanothermobacter</taxon>
    </lineage>
</organism>
<dbReference type="EC" id="3.1.26.5" evidence="1"/>
<dbReference type="EMBL" id="AE000666">
    <property type="protein sequence ID" value="AAB84512.1"/>
    <property type="molecule type" value="Genomic_DNA"/>
</dbReference>
<dbReference type="PIR" id="B69013">
    <property type="entry name" value="B69013"/>
</dbReference>
<dbReference type="RefSeq" id="WP_010875653.1">
    <property type="nucleotide sequence ID" value="NC_000916.1"/>
</dbReference>
<dbReference type="PDB" id="1OQK">
    <property type="method" value="NMR"/>
    <property type="chains" value="A=2-93"/>
</dbReference>
<dbReference type="PDBsum" id="1OQK"/>
<dbReference type="BMRB" id="O26119"/>
<dbReference type="SMR" id="O26119"/>
<dbReference type="FunCoup" id="O26119">
    <property type="interactions" value="3"/>
</dbReference>
<dbReference type="IntAct" id="O26119">
    <property type="interactions" value="1"/>
</dbReference>
<dbReference type="STRING" id="187420.MTH_11"/>
<dbReference type="PaxDb" id="187420-MTH_11"/>
<dbReference type="EnsemblBacteria" id="AAB84512">
    <property type="protein sequence ID" value="AAB84512"/>
    <property type="gene ID" value="MTH_11"/>
</dbReference>
<dbReference type="GeneID" id="82296509"/>
<dbReference type="KEGG" id="mth:MTH_11"/>
<dbReference type="PATRIC" id="fig|187420.15.peg.11"/>
<dbReference type="HOGENOM" id="CLU_107020_2_1_2"/>
<dbReference type="InParanoid" id="O26119"/>
<dbReference type="EvolutionaryTrace" id="O26119"/>
<dbReference type="Proteomes" id="UP000005223">
    <property type="component" value="Chromosome"/>
</dbReference>
<dbReference type="GO" id="GO:0005737">
    <property type="term" value="C:cytoplasm"/>
    <property type="evidence" value="ECO:0007669"/>
    <property type="project" value="UniProtKB-SubCell"/>
</dbReference>
<dbReference type="GO" id="GO:0030677">
    <property type="term" value="C:ribonuclease P complex"/>
    <property type="evidence" value="ECO:0007669"/>
    <property type="project" value="UniProtKB-UniRule"/>
</dbReference>
<dbReference type="GO" id="GO:0004526">
    <property type="term" value="F:ribonuclease P activity"/>
    <property type="evidence" value="ECO:0007669"/>
    <property type="project" value="UniProtKB-UniRule"/>
</dbReference>
<dbReference type="GO" id="GO:0003723">
    <property type="term" value="F:RNA binding"/>
    <property type="evidence" value="ECO:0007669"/>
    <property type="project" value="InterPro"/>
</dbReference>
<dbReference type="GO" id="GO:0001682">
    <property type="term" value="P:tRNA 5'-leader removal"/>
    <property type="evidence" value="ECO:0007669"/>
    <property type="project" value="UniProtKB-UniRule"/>
</dbReference>
<dbReference type="Gene3D" id="2.30.30.210">
    <property type="entry name" value="Ribonuclease P/MRP, subunit p29"/>
    <property type="match status" value="1"/>
</dbReference>
<dbReference type="HAMAP" id="MF_00754">
    <property type="entry name" value="RNase_P_1"/>
    <property type="match status" value="1"/>
</dbReference>
<dbReference type="InterPro" id="IPR036980">
    <property type="entry name" value="RNase_P/MRP_Rpp29_sf"/>
</dbReference>
<dbReference type="InterPro" id="IPR023538">
    <property type="entry name" value="RNP1"/>
</dbReference>
<dbReference type="InterPro" id="IPR023534">
    <property type="entry name" value="Rof/RNase_P-like"/>
</dbReference>
<dbReference type="InterPro" id="IPR002730">
    <property type="entry name" value="Rpp29/RNP1"/>
</dbReference>
<dbReference type="NCBIfam" id="NF046110">
    <property type="entry name" value="RNaseP1Mthb"/>
    <property type="match status" value="1"/>
</dbReference>
<dbReference type="Pfam" id="PF01868">
    <property type="entry name" value="RNase_P-MRP_p29"/>
    <property type="match status" value="1"/>
</dbReference>
<dbReference type="SMART" id="SM00538">
    <property type="entry name" value="POP4"/>
    <property type="match status" value="1"/>
</dbReference>
<dbReference type="SUPFAM" id="SSF101744">
    <property type="entry name" value="Rof/RNase P subunit-like"/>
    <property type="match status" value="1"/>
</dbReference>
<feature type="chain" id="PRO_0000128433" description="Ribonuclease P protein component 1">
    <location>
        <begin position="1"/>
        <end position="93"/>
    </location>
</feature>
<feature type="strand" evidence="4">
    <location>
        <begin position="16"/>
        <end position="21"/>
    </location>
</feature>
<feature type="turn" evidence="4">
    <location>
        <begin position="25"/>
        <end position="29"/>
    </location>
</feature>
<feature type="strand" evidence="4">
    <location>
        <begin position="31"/>
        <end position="33"/>
    </location>
</feature>
<feature type="strand" evidence="4">
    <location>
        <begin position="36"/>
        <end position="38"/>
    </location>
</feature>
<feature type="strand" evidence="4">
    <location>
        <begin position="41"/>
        <end position="46"/>
    </location>
</feature>
<feature type="turn" evidence="4">
    <location>
        <begin position="47"/>
        <end position="49"/>
    </location>
</feature>
<feature type="strand" evidence="4">
    <location>
        <begin position="50"/>
        <end position="55"/>
    </location>
</feature>
<feature type="strand" evidence="4">
    <location>
        <begin position="60"/>
        <end position="65"/>
    </location>
</feature>
<feature type="turn" evidence="4">
    <location>
        <begin position="66"/>
        <end position="68"/>
    </location>
</feature>
<feature type="strand" evidence="4">
    <location>
        <begin position="69"/>
        <end position="73"/>
    </location>
</feature>
<feature type="strand" evidence="4">
    <location>
        <begin position="75"/>
        <end position="77"/>
    </location>
</feature>
<reference key="1">
    <citation type="journal article" date="1997" name="J. Bacteriol.">
        <title>Complete genome sequence of Methanobacterium thermoautotrophicum deltaH: functional analysis and comparative genomics.</title>
        <authorList>
            <person name="Smith D.R."/>
            <person name="Doucette-Stamm L.A."/>
            <person name="Deloughery C."/>
            <person name="Lee H.-M."/>
            <person name="Dubois J."/>
            <person name="Aldredge T."/>
            <person name="Bashirzadeh R."/>
            <person name="Blakely D."/>
            <person name="Cook R."/>
            <person name="Gilbert K."/>
            <person name="Harrison D."/>
            <person name="Hoang L."/>
            <person name="Keagle P."/>
            <person name="Lumm W."/>
            <person name="Pothier B."/>
            <person name="Qiu D."/>
            <person name="Spadafora R."/>
            <person name="Vicare R."/>
            <person name="Wang Y."/>
            <person name="Wierzbowski J."/>
            <person name="Gibson R."/>
            <person name="Jiwani N."/>
            <person name="Caruso A."/>
            <person name="Bush D."/>
            <person name="Safer H."/>
            <person name="Patwell D."/>
            <person name="Prabhakar S."/>
            <person name="McDougall S."/>
            <person name="Shimer G."/>
            <person name="Goyal A."/>
            <person name="Pietrovski S."/>
            <person name="Church G.M."/>
            <person name="Daniels C.J."/>
            <person name="Mao J.-I."/>
            <person name="Rice P."/>
            <person name="Noelling J."/>
            <person name="Reeve J.N."/>
        </authorList>
    </citation>
    <scope>NUCLEOTIDE SEQUENCE [LARGE SCALE GENOMIC DNA]</scope>
    <source>
        <strain>ATCC 29096 / DSM 1053 / JCM 10044 / NBRC 100330 / Delta H</strain>
    </source>
</reference>
<reference key="2">
    <citation type="journal article" date="2002" name="RNA">
        <title>Archaeal RNase P has multiple protein subunits homologous to eukaryotic nuclear RNase P proteins.</title>
        <authorList>
            <person name="Hall T.A."/>
            <person name="Brown J.W."/>
        </authorList>
    </citation>
    <scope>FUNCTION</scope>
    <scope>SUBUNIT</scope>
    <scope>INDUCTION</scope>
    <source>
        <strain>ATCC 29096 / DSM 1053 / JCM 10044 / NBRC 100330 / Delta H</strain>
    </source>
</reference>
<reference key="3">
    <citation type="journal article" date="2003" name="Proc. Natl. Acad. Sci. U.S.A.">
        <title>Structure of Mth11/Mth Rpp29, an essential protein subunit of archaeal and eukaryotic RNase P.</title>
        <authorList>
            <person name="Boomershine W.P."/>
            <person name="McElroy C.A."/>
            <person name="Tsai H.Y."/>
            <person name="Wilson R.C."/>
            <person name="Gopalan V."/>
            <person name="Foster M.P."/>
        </authorList>
    </citation>
    <scope>STRUCTURE BY NMR OF 2-93</scope>
    <scope>FUNCTION</scope>
    <scope>RNA-BINDING</scope>
</reference>
<proteinExistence type="evidence at protein level"/>
<keyword id="KW-0002">3D-structure</keyword>
<keyword id="KW-0963">Cytoplasm</keyword>
<keyword id="KW-0255">Endonuclease</keyword>
<keyword id="KW-0378">Hydrolase</keyword>
<keyword id="KW-0540">Nuclease</keyword>
<keyword id="KW-1185">Reference proteome</keyword>
<keyword id="KW-0819">tRNA processing</keyword>
<evidence type="ECO:0000255" key="1">
    <source>
        <dbReference type="HAMAP-Rule" id="MF_00754"/>
    </source>
</evidence>
<evidence type="ECO:0000269" key="2">
    <source>
    </source>
</evidence>
<evidence type="ECO:0000269" key="3">
    <source>
    </source>
</evidence>
<evidence type="ECO:0007829" key="4">
    <source>
        <dbReference type="PDB" id="1OQK"/>
    </source>
</evidence>
<sequence>MITPRNIFRHELIGLSVRIARSVHRDIQGISGRVVDETRNTLRIEMDDGREITVPKGIAVFHFRTPQGELVEIDGRALVARPEERIKKKFRKP</sequence>
<comment type="function">
    <text evidence="1 2 3">Part of ribonuclease P, a protein complex that generates mature tRNA molecules by cleaving their 5'-ends.</text>
</comment>
<comment type="catalytic activity">
    <reaction evidence="1">
        <text>Endonucleolytic cleavage of RNA, removing 5'-extranucleotides from tRNA precursor.</text>
        <dbReference type="EC" id="3.1.26.5"/>
    </reaction>
</comment>
<comment type="subunit">
    <text evidence="1 2">Consists of a catalytic RNA component and at least 4-5 protein subunits.</text>
</comment>
<comment type="subcellular location">
    <subcellularLocation>
        <location evidence="1">Cytoplasm</location>
    </subcellularLocation>
</comment>
<comment type="induction">
    <text evidence="2">Constitutively expressed (at protein level).</text>
</comment>
<comment type="similarity">
    <text evidence="1">Belongs to the eukaryotic/archaeal RNase P protein component 1 family.</text>
</comment>
<name>RNP1_METTH</name>